<reference key="1">
    <citation type="journal article" date="1991" name="Proc. Natl. Acad. Sci. U.S.A.">
        <title>TAL2, a helix-loop-helix gene activated by the (7;9)(q34;q32) translocation in human T-cell leukemia.</title>
        <authorList>
            <person name="Xia Y."/>
            <person name="Brown L."/>
            <person name="Yang C.Y.-C."/>
            <person name="Tsan J.T."/>
            <person name="Siciliano M.J."/>
            <person name="Espinosa R. III"/>
            <person name="Le Beau M.M."/>
            <person name="Baer R.J."/>
        </authorList>
    </citation>
    <scope>NUCLEOTIDE SEQUENCE [GENOMIC DNA]</scope>
</reference>
<reference key="2">
    <citation type="journal article" date="2005" name="Science">
        <title>The transcriptional landscape of the mammalian genome.</title>
        <authorList>
            <person name="Carninci P."/>
            <person name="Kasukawa T."/>
            <person name="Katayama S."/>
            <person name="Gough J."/>
            <person name="Frith M.C."/>
            <person name="Maeda N."/>
            <person name="Oyama R."/>
            <person name="Ravasi T."/>
            <person name="Lenhard B."/>
            <person name="Wells C."/>
            <person name="Kodzius R."/>
            <person name="Shimokawa K."/>
            <person name="Bajic V.B."/>
            <person name="Brenner S.E."/>
            <person name="Batalov S."/>
            <person name="Forrest A.R."/>
            <person name="Zavolan M."/>
            <person name="Davis M.J."/>
            <person name="Wilming L.G."/>
            <person name="Aidinis V."/>
            <person name="Allen J.E."/>
            <person name="Ambesi-Impiombato A."/>
            <person name="Apweiler R."/>
            <person name="Aturaliya R.N."/>
            <person name="Bailey T.L."/>
            <person name="Bansal M."/>
            <person name="Baxter L."/>
            <person name="Beisel K.W."/>
            <person name="Bersano T."/>
            <person name="Bono H."/>
            <person name="Chalk A.M."/>
            <person name="Chiu K.P."/>
            <person name="Choudhary V."/>
            <person name="Christoffels A."/>
            <person name="Clutterbuck D.R."/>
            <person name="Crowe M.L."/>
            <person name="Dalla E."/>
            <person name="Dalrymple B.P."/>
            <person name="de Bono B."/>
            <person name="Della Gatta G."/>
            <person name="di Bernardo D."/>
            <person name="Down T."/>
            <person name="Engstrom P."/>
            <person name="Fagiolini M."/>
            <person name="Faulkner G."/>
            <person name="Fletcher C.F."/>
            <person name="Fukushima T."/>
            <person name="Furuno M."/>
            <person name="Futaki S."/>
            <person name="Gariboldi M."/>
            <person name="Georgii-Hemming P."/>
            <person name="Gingeras T.R."/>
            <person name="Gojobori T."/>
            <person name="Green R.E."/>
            <person name="Gustincich S."/>
            <person name="Harbers M."/>
            <person name="Hayashi Y."/>
            <person name="Hensch T.K."/>
            <person name="Hirokawa N."/>
            <person name="Hill D."/>
            <person name="Huminiecki L."/>
            <person name="Iacono M."/>
            <person name="Ikeo K."/>
            <person name="Iwama A."/>
            <person name="Ishikawa T."/>
            <person name="Jakt M."/>
            <person name="Kanapin A."/>
            <person name="Katoh M."/>
            <person name="Kawasawa Y."/>
            <person name="Kelso J."/>
            <person name="Kitamura H."/>
            <person name="Kitano H."/>
            <person name="Kollias G."/>
            <person name="Krishnan S.P."/>
            <person name="Kruger A."/>
            <person name="Kummerfeld S.K."/>
            <person name="Kurochkin I.V."/>
            <person name="Lareau L.F."/>
            <person name="Lazarevic D."/>
            <person name="Lipovich L."/>
            <person name="Liu J."/>
            <person name="Liuni S."/>
            <person name="McWilliam S."/>
            <person name="Madan Babu M."/>
            <person name="Madera M."/>
            <person name="Marchionni L."/>
            <person name="Matsuda H."/>
            <person name="Matsuzawa S."/>
            <person name="Miki H."/>
            <person name="Mignone F."/>
            <person name="Miyake S."/>
            <person name="Morris K."/>
            <person name="Mottagui-Tabar S."/>
            <person name="Mulder N."/>
            <person name="Nakano N."/>
            <person name="Nakauchi H."/>
            <person name="Ng P."/>
            <person name="Nilsson R."/>
            <person name="Nishiguchi S."/>
            <person name="Nishikawa S."/>
            <person name="Nori F."/>
            <person name="Ohara O."/>
            <person name="Okazaki Y."/>
            <person name="Orlando V."/>
            <person name="Pang K.C."/>
            <person name="Pavan W.J."/>
            <person name="Pavesi G."/>
            <person name="Pesole G."/>
            <person name="Petrovsky N."/>
            <person name="Piazza S."/>
            <person name="Reed J."/>
            <person name="Reid J.F."/>
            <person name="Ring B.Z."/>
            <person name="Ringwald M."/>
            <person name="Rost B."/>
            <person name="Ruan Y."/>
            <person name="Salzberg S.L."/>
            <person name="Sandelin A."/>
            <person name="Schneider C."/>
            <person name="Schoenbach C."/>
            <person name="Sekiguchi K."/>
            <person name="Semple C.A."/>
            <person name="Seno S."/>
            <person name="Sessa L."/>
            <person name="Sheng Y."/>
            <person name="Shibata Y."/>
            <person name="Shimada H."/>
            <person name="Shimada K."/>
            <person name="Silva D."/>
            <person name="Sinclair B."/>
            <person name="Sperling S."/>
            <person name="Stupka E."/>
            <person name="Sugiura K."/>
            <person name="Sultana R."/>
            <person name="Takenaka Y."/>
            <person name="Taki K."/>
            <person name="Tammoja K."/>
            <person name="Tan S.L."/>
            <person name="Tang S."/>
            <person name="Taylor M.S."/>
            <person name="Tegner J."/>
            <person name="Teichmann S.A."/>
            <person name="Ueda H.R."/>
            <person name="van Nimwegen E."/>
            <person name="Verardo R."/>
            <person name="Wei C.L."/>
            <person name="Yagi K."/>
            <person name="Yamanishi H."/>
            <person name="Zabarovsky E."/>
            <person name="Zhu S."/>
            <person name="Zimmer A."/>
            <person name="Hide W."/>
            <person name="Bult C."/>
            <person name="Grimmond S.M."/>
            <person name="Teasdale R.D."/>
            <person name="Liu E.T."/>
            <person name="Brusic V."/>
            <person name="Quackenbush J."/>
            <person name="Wahlestedt C."/>
            <person name="Mattick J.S."/>
            <person name="Hume D.A."/>
            <person name="Kai C."/>
            <person name="Sasaki D."/>
            <person name="Tomaru Y."/>
            <person name="Fukuda S."/>
            <person name="Kanamori-Katayama M."/>
            <person name="Suzuki M."/>
            <person name="Aoki J."/>
            <person name="Arakawa T."/>
            <person name="Iida J."/>
            <person name="Imamura K."/>
            <person name="Itoh M."/>
            <person name="Kato T."/>
            <person name="Kawaji H."/>
            <person name="Kawagashira N."/>
            <person name="Kawashima T."/>
            <person name="Kojima M."/>
            <person name="Kondo S."/>
            <person name="Konno H."/>
            <person name="Nakano K."/>
            <person name="Ninomiya N."/>
            <person name="Nishio T."/>
            <person name="Okada M."/>
            <person name="Plessy C."/>
            <person name="Shibata K."/>
            <person name="Shiraki T."/>
            <person name="Suzuki S."/>
            <person name="Tagami M."/>
            <person name="Waki K."/>
            <person name="Watahiki A."/>
            <person name="Okamura-Oho Y."/>
            <person name="Suzuki H."/>
            <person name="Kawai J."/>
            <person name="Hayashizaki Y."/>
        </authorList>
    </citation>
    <scope>NUCLEOTIDE SEQUENCE [LARGE SCALE MRNA]</scope>
    <source>
        <strain>C57BL/6J</strain>
        <tissue>Lung</tissue>
    </source>
</reference>
<feature type="chain" id="PRO_0000127457" description="T-cell acute lymphocytic leukemia protein 2 homolog">
    <location>
        <begin position="1"/>
        <end position="108"/>
    </location>
</feature>
<feature type="domain" description="bHLH" evidence="1">
    <location>
        <begin position="2"/>
        <end position="54"/>
    </location>
</feature>
<feature type="region of interest" description="Disordered" evidence="2">
    <location>
        <begin position="76"/>
        <end position="108"/>
    </location>
</feature>
<name>TAL2_MOUSE</name>
<protein>
    <recommendedName>
        <fullName>T-cell acute lymphocytic leukemia protein 2 homolog</fullName>
        <shortName>TAL-2</shortName>
    </recommendedName>
</protein>
<dbReference type="EMBL" id="M81077">
    <property type="protein sequence ID" value="AAA40162.1"/>
    <property type="molecule type" value="Genomic_DNA"/>
</dbReference>
<dbReference type="EMBL" id="AK018448">
    <property type="protein sequence ID" value="BAB31216.1"/>
    <property type="molecule type" value="mRNA"/>
</dbReference>
<dbReference type="CCDS" id="CCDS18192.1"/>
<dbReference type="RefSeq" id="NP_033343.1">
    <property type="nucleotide sequence ID" value="NM_009317.4"/>
</dbReference>
<dbReference type="SMR" id="Q62282"/>
<dbReference type="BioGRID" id="203963">
    <property type="interactions" value="3"/>
</dbReference>
<dbReference type="FunCoup" id="Q62282">
    <property type="interactions" value="84"/>
</dbReference>
<dbReference type="IntAct" id="Q62282">
    <property type="interactions" value="3"/>
</dbReference>
<dbReference type="STRING" id="10090.ENSMUSP00000030124"/>
<dbReference type="iPTMnet" id="Q62282"/>
<dbReference type="PhosphoSitePlus" id="Q62282"/>
<dbReference type="PaxDb" id="10090-ENSMUSP00000030124"/>
<dbReference type="Antibodypedia" id="29308">
    <property type="antibodies" value="76 antibodies from 23 providers"/>
</dbReference>
<dbReference type="DNASU" id="21350"/>
<dbReference type="Ensembl" id="ENSMUST00000030124.4">
    <property type="protein sequence ID" value="ENSMUSP00000030124.4"/>
    <property type="gene ID" value="ENSMUSG00000028417.4"/>
</dbReference>
<dbReference type="GeneID" id="21350"/>
<dbReference type="KEGG" id="mmu:21350"/>
<dbReference type="UCSC" id="uc008sxg.1">
    <property type="organism name" value="mouse"/>
</dbReference>
<dbReference type="AGR" id="MGI:99540"/>
<dbReference type="CTD" id="6887"/>
<dbReference type="MGI" id="MGI:99540">
    <property type="gene designation" value="Tal2"/>
</dbReference>
<dbReference type="VEuPathDB" id="HostDB:ENSMUSG00000028417"/>
<dbReference type="eggNOG" id="KOG4029">
    <property type="taxonomic scope" value="Eukaryota"/>
</dbReference>
<dbReference type="GeneTree" id="ENSGT00940000160867"/>
<dbReference type="HOGENOM" id="CLU_158724_0_0_1"/>
<dbReference type="InParanoid" id="Q62282"/>
<dbReference type="OMA" id="EDCGVPS"/>
<dbReference type="OrthoDB" id="10069510at2759"/>
<dbReference type="PhylomeDB" id="Q62282"/>
<dbReference type="TreeFam" id="TF315153"/>
<dbReference type="BioGRID-ORCS" id="21350">
    <property type="hits" value="2 hits in 79 CRISPR screens"/>
</dbReference>
<dbReference type="ChiTaRS" id="Tal2">
    <property type="organism name" value="mouse"/>
</dbReference>
<dbReference type="PRO" id="PR:Q62282"/>
<dbReference type="Proteomes" id="UP000000589">
    <property type="component" value="Chromosome 4"/>
</dbReference>
<dbReference type="RNAct" id="Q62282">
    <property type="molecule type" value="protein"/>
</dbReference>
<dbReference type="Bgee" id="ENSMUSG00000028417">
    <property type="expression patterns" value="Expressed in midbrain lateral wall and 27 other cell types or tissues"/>
</dbReference>
<dbReference type="ExpressionAtlas" id="Q62282">
    <property type="expression patterns" value="baseline and differential"/>
</dbReference>
<dbReference type="GO" id="GO:0003677">
    <property type="term" value="F:DNA binding"/>
    <property type="evidence" value="ECO:0007669"/>
    <property type="project" value="UniProtKB-KW"/>
</dbReference>
<dbReference type="GO" id="GO:0000981">
    <property type="term" value="F:DNA-binding transcription factor activity, RNA polymerase II-specific"/>
    <property type="evidence" value="ECO:0007669"/>
    <property type="project" value="InterPro"/>
</dbReference>
<dbReference type="GO" id="GO:0046983">
    <property type="term" value="F:protein dimerization activity"/>
    <property type="evidence" value="ECO:0007669"/>
    <property type="project" value="InterPro"/>
</dbReference>
<dbReference type="GO" id="GO:0030901">
    <property type="term" value="P:midbrain development"/>
    <property type="evidence" value="ECO:0000315"/>
    <property type="project" value="MGI"/>
</dbReference>
<dbReference type="GO" id="GO:0035264">
    <property type="term" value="P:multicellular organism growth"/>
    <property type="evidence" value="ECO:0000315"/>
    <property type="project" value="MGI"/>
</dbReference>
<dbReference type="GO" id="GO:0009791">
    <property type="term" value="P:post-embryonic development"/>
    <property type="evidence" value="ECO:0000315"/>
    <property type="project" value="MGI"/>
</dbReference>
<dbReference type="GO" id="GO:0021794">
    <property type="term" value="P:thalamus development"/>
    <property type="evidence" value="ECO:0000315"/>
    <property type="project" value="MGI"/>
</dbReference>
<dbReference type="FunFam" id="4.10.280.10:FF:000015">
    <property type="entry name" value="T-cell acute lymphocytic leukemia 1"/>
    <property type="match status" value="1"/>
</dbReference>
<dbReference type="Gene3D" id="4.10.280.10">
    <property type="entry name" value="Helix-loop-helix DNA-binding domain"/>
    <property type="match status" value="1"/>
</dbReference>
<dbReference type="InterPro" id="IPR011598">
    <property type="entry name" value="bHLH_dom"/>
</dbReference>
<dbReference type="InterPro" id="IPR036638">
    <property type="entry name" value="HLH_DNA-bd_sf"/>
</dbReference>
<dbReference type="InterPro" id="IPR040238">
    <property type="entry name" value="TAL-like"/>
</dbReference>
<dbReference type="PANTHER" id="PTHR13864:SF21">
    <property type="entry name" value="T-CELL ACUTE LYMPHOCYTIC LEUKEMIA PROTEIN 2"/>
    <property type="match status" value="1"/>
</dbReference>
<dbReference type="PANTHER" id="PTHR13864">
    <property type="entry name" value="T-CELL ACUTE LYMPHOCYTIC LEUKEMIA/STEM CELL LEUKEMIA-RELATED"/>
    <property type="match status" value="1"/>
</dbReference>
<dbReference type="Pfam" id="PF00010">
    <property type="entry name" value="HLH"/>
    <property type="match status" value="1"/>
</dbReference>
<dbReference type="SMART" id="SM00353">
    <property type="entry name" value="HLH"/>
    <property type="match status" value="1"/>
</dbReference>
<dbReference type="SUPFAM" id="SSF47459">
    <property type="entry name" value="HLH, helix-loop-helix DNA-binding domain"/>
    <property type="match status" value="1"/>
</dbReference>
<dbReference type="PROSITE" id="PS50888">
    <property type="entry name" value="BHLH"/>
    <property type="match status" value="1"/>
</dbReference>
<gene>
    <name type="primary">Tal2</name>
</gene>
<accession>Q62282</accession>
<evidence type="ECO:0000255" key="1">
    <source>
        <dbReference type="PROSITE-ProRule" id="PRU00981"/>
    </source>
</evidence>
<evidence type="ECO:0000256" key="2">
    <source>
        <dbReference type="SAM" id="MobiDB-lite"/>
    </source>
</evidence>
<proteinExistence type="predicted"/>
<keyword id="KW-0238">DNA-binding</keyword>
<keyword id="KW-1185">Reference proteome</keyword>
<keyword id="KW-0804">Transcription</keyword>
<keyword id="KW-0805">Transcription regulation</keyword>
<organism>
    <name type="scientific">Mus musculus</name>
    <name type="common">Mouse</name>
    <dbReference type="NCBI Taxonomy" id="10090"/>
    <lineage>
        <taxon>Eukaryota</taxon>
        <taxon>Metazoa</taxon>
        <taxon>Chordata</taxon>
        <taxon>Craniata</taxon>
        <taxon>Vertebrata</taxon>
        <taxon>Euteleostomi</taxon>
        <taxon>Mammalia</taxon>
        <taxon>Eutheria</taxon>
        <taxon>Euarchontoglires</taxon>
        <taxon>Glires</taxon>
        <taxon>Rodentia</taxon>
        <taxon>Myomorpha</taxon>
        <taxon>Muroidea</taxon>
        <taxon>Muridae</taxon>
        <taxon>Murinae</taxon>
        <taxon>Mus</taxon>
        <taxon>Mus</taxon>
    </lineage>
</organism>
<sequence length="108" mass="12315">MTRKIFTNTRERWRQQSVNNAFAKLRKLIPTHPPDKKLSKNETLRLAMRYINFLVKVLGEQSLHQTGVAAQGNILGLFPPKTRLPDEDDRTLLNDYRVPSPGPSHGAP</sequence>